<protein>
    <recommendedName>
        <fullName evidence="1">Phosphoribosylformylglycinamidine synthase subunit PurL</fullName>
        <shortName evidence="1">FGAM synthase</shortName>
        <ecNumber evidence="1">6.3.5.3</ecNumber>
    </recommendedName>
    <alternativeName>
        <fullName evidence="1">Formylglycinamide ribonucleotide amidotransferase subunit II</fullName>
        <shortName evidence="1">FGAR amidotransferase II</shortName>
        <shortName evidence="1">FGAR-AT II</shortName>
    </alternativeName>
    <alternativeName>
        <fullName evidence="1">Glutamine amidotransferase PurL</fullName>
    </alternativeName>
    <alternativeName>
        <fullName evidence="1">Phosphoribosylformylglycinamidine synthase subunit II</fullName>
    </alternativeName>
</protein>
<sequence length="759" mass="83612">MIFRTIRIRDADDARLKAISKRLGLALSLDEMKAVRSYFERLGRDPIDAEIHAVAQSWSEHCSYKSSKYYLKKYLGSLKTDYTILAMEDDAGVVDFDGEYAYVLKMESHNHPSAVEPYGGAATGIGGIVRDVLCMGAQPVALIDSLFLGDVSSDRYEGLLSPRYIFGGVVGGIRDYGNRIGIPNVAGSLYFDKLYNSNPLVNAGCVGIVRRDRIVRSKSYKPGDVLVLMGGKTGRDGIHGVNFASTTLGKVTKSSRLAIQLGNPIVEQPMIKAVLEANDAGLIRAMKDLGGGGLSSAATEMVYAGGFGAEITLDDIKLKESNMSGWEIWISESQERMLMECYPEDVEKIRQIAEKWNLDFSVIGQVTADRRIRVYYKKRKIIDMDIEFLDDSPVYQRPYRIKEVEKSVTVPQEPEDLNSFVRDFMARLNTCARFNVVRQYDHTVRGSTIVTPFVGRPNKETHADATVIKPLENSMRGLVLTSGSRPNMVSVDPYAGTLLTLAEAYKNILSTGGRPHSVVDALNFGNPEREEIMGQFVESVRAIGDFCRKMGLPVVAGNVSFYNEYRKTDIMPTPTIMMVGLIDDVRRSRTTYMKGSGNAIYLIGEPCDNLTGSEYSRMHGYTDGFLPAPDLDELTRIRDFLSSKADMILSSHDVSSGGLFAALSEMSFGSGIGFHVDISNVSAARPTVKLFSECGNGLVLEIAKDKEEQFVDGSNGLAIKRLGETGGDRIIVDEAGLNIIDVAVDDLRGAWEHGLDRYI</sequence>
<accession>Q9HJA4</accession>
<name>PURL_THEAC</name>
<reference key="1">
    <citation type="journal article" date="2000" name="Nature">
        <title>The genome sequence of the thermoacidophilic scavenger Thermoplasma acidophilum.</title>
        <authorList>
            <person name="Ruepp A."/>
            <person name="Graml W."/>
            <person name="Santos-Martinez M.-L."/>
            <person name="Koretke K.K."/>
            <person name="Volker C."/>
            <person name="Mewes H.-W."/>
            <person name="Frishman D."/>
            <person name="Stocker S."/>
            <person name="Lupas A.N."/>
            <person name="Baumeister W."/>
        </authorList>
    </citation>
    <scope>NUCLEOTIDE SEQUENCE [LARGE SCALE GENOMIC DNA]</scope>
    <source>
        <strain>ATCC 25905 / DSM 1728 / JCM 9062 / NBRC 15155 / AMRC-C165</strain>
    </source>
</reference>
<gene>
    <name evidence="1" type="primary">purL</name>
    <name type="ordered locus">Ta1066</name>
</gene>
<dbReference type="EC" id="6.3.5.3" evidence="1"/>
<dbReference type="EMBL" id="AL445066">
    <property type="protein sequence ID" value="CAC12194.1"/>
    <property type="molecule type" value="Genomic_DNA"/>
</dbReference>
<dbReference type="RefSeq" id="WP_010901477.1">
    <property type="nucleotide sequence ID" value="NC_002578.1"/>
</dbReference>
<dbReference type="SMR" id="Q9HJA4"/>
<dbReference type="FunCoup" id="Q9HJA4">
    <property type="interactions" value="129"/>
</dbReference>
<dbReference type="STRING" id="273075.gene:9572287"/>
<dbReference type="PaxDb" id="273075-Ta1066"/>
<dbReference type="EnsemblBacteria" id="CAC12194">
    <property type="protein sequence ID" value="CAC12194"/>
    <property type="gene ID" value="CAC12194"/>
</dbReference>
<dbReference type="KEGG" id="tac:Ta1066"/>
<dbReference type="eggNOG" id="arCOG00641">
    <property type="taxonomic scope" value="Archaea"/>
</dbReference>
<dbReference type="HOGENOM" id="CLU_003100_0_1_2"/>
<dbReference type="InParanoid" id="Q9HJA4"/>
<dbReference type="OrthoDB" id="8251at2157"/>
<dbReference type="UniPathway" id="UPA00074">
    <property type="reaction ID" value="UER00128"/>
</dbReference>
<dbReference type="Proteomes" id="UP000001024">
    <property type="component" value="Chromosome"/>
</dbReference>
<dbReference type="GO" id="GO:0005737">
    <property type="term" value="C:cytoplasm"/>
    <property type="evidence" value="ECO:0007669"/>
    <property type="project" value="UniProtKB-SubCell"/>
</dbReference>
<dbReference type="GO" id="GO:0005524">
    <property type="term" value="F:ATP binding"/>
    <property type="evidence" value="ECO:0007669"/>
    <property type="project" value="UniProtKB-UniRule"/>
</dbReference>
<dbReference type="GO" id="GO:0000287">
    <property type="term" value="F:magnesium ion binding"/>
    <property type="evidence" value="ECO:0007669"/>
    <property type="project" value="UniProtKB-UniRule"/>
</dbReference>
<dbReference type="GO" id="GO:0004642">
    <property type="term" value="F:phosphoribosylformylglycinamidine synthase activity"/>
    <property type="evidence" value="ECO:0007669"/>
    <property type="project" value="UniProtKB-UniRule"/>
</dbReference>
<dbReference type="GO" id="GO:0006189">
    <property type="term" value="P:'de novo' IMP biosynthetic process"/>
    <property type="evidence" value="ECO:0007669"/>
    <property type="project" value="UniProtKB-UniRule"/>
</dbReference>
<dbReference type="CDD" id="cd02203">
    <property type="entry name" value="PurL_repeat1"/>
    <property type="match status" value="1"/>
</dbReference>
<dbReference type="CDD" id="cd02204">
    <property type="entry name" value="PurL_repeat2"/>
    <property type="match status" value="1"/>
</dbReference>
<dbReference type="Gene3D" id="3.90.650.10">
    <property type="entry name" value="PurM-like C-terminal domain"/>
    <property type="match status" value="2"/>
</dbReference>
<dbReference type="Gene3D" id="3.30.1330.10">
    <property type="entry name" value="PurM-like, N-terminal domain"/>
    <property type="match status" value="2"/>
</dbReference>
<dbReference type="HAMAP" id="MF_00420">
    <property type="entry name" value="PurL_2"/>
    <property type="match status" value="1"/>
</dbReference>
<dbReference type="InterPro" id="IPR010074">
    <property type="entry name" value="PRibForGlyAmidine_synth_PurL"/>
</dbReference>
<dbReference type="InterPro" id="IPR041609">
    <property type="entry name" value="PurL_linker"/>
</dbReference>
<dbReference type="InterPro" id="IPR010918">
    <property type="entry name" value="PurM-like_C_dom"/>
</dbReference>
<dbReference type="InterPro" id="IPR036676">
    <property type="entry name" value="PurM-like_C_sf"/>
</dbReference>
<dbReference type="InterPro" id="IPR016188">
    <property type="entry name" value="PurM-like_N"/>
</dbReference>
<dbReference type="InterPro" id="IPR036921">
    <property type="entry name" value="PurM-like_N_sf"/>
</dbReference>
<dbReference type="NCBIfam" id="TIGR01736">
    <property type="entry name" value="FGAM_synth_II"/>
    <property type="match status" value="1"/>
</dbReference>
<dbReference type="NCBIfam" id="NF002290">
    <property type="entry name" value="PRK01213.1"/>
    <property type="match status" value="1"/>
</dbReference>
<dbReference type="PANTHER" id="PTHR43555">
    <property type="entry name" value="PHOSPHORIBOSYLFORMYLGLYCINAMIDINE SYNTHASE SUBUNIT PURL"/>
    <property type="match status" value="1"/>
</dbReference>
<dbReference type="PANTHER" id="PTHR43555:SF1">
    <property type="entry name" value="PHOSPHORIBOSYLFORMYLGLYCINAMIDINE SYNTHASE SUBUNIT PURL"/>
    <property type="match status" value="1"/>
</dbReference>
<dbReference type="Pfam" id="PF00586">
    <property type="entry name" value="AIRS"/>
    <property type="match status" value="2"/>
</dbReference>
<dbReference type="Pfam" id="PF02769">
    <property type="entry name" value="AIRS_C"/>
    <property type="match status" value="2"/>
</dbReference>
<dbReference type="Pfam" id="PF18072">
    <property type="entry name" value="FGAR-AT_linker"/>
    <property type="match status" value="1"/>
</dbReference>
<dbReference type="PIRSF" id="PIRSF001587">
    <property type="entry name" value="FGAM_synthase_II"/>
    <property type="match status" value="1"/>
</dbReference>
<dbReference type="SUPFAM" id="SSF56042">
    <property type="entry name" value="PurM C-terminal domain-like"/>
    <property type="match status" value="2"/>
</dbReference>
<dbReference type="SUPFAM" id="SSF55326">
    <property type="entry name" value="PurM N-terminal domain-like"/>
    <property type="match status" value="2"/>
</dbReference>
<feature type="chain" id="PRO_0000100527" description="Phosphoribosylformylglycinamidine synthase subunit PurL">
    <location>
        <begin position="1"/>
        <end position="759"/>
    </location>
</feature>
<feature type="active site" evidence="1">
    <location>
        <position position="61"/>
    </location>
</feature>
<feature type="active site" description="Proton acceptor" evidence="1">
    <location>
        <position position="109"/>
    </location>
</feature>
<feature type="binding site" evidence="1">
    <location>
        <position position="64"/>
    </location>
    <ligand>
        <name>ATP</name>
        <dbReference type="ChEBI" id="CHEBI:30616"/>
    </ligand>
</feature>
<feature type="binding site" evidence="1">
    <location>
        <position position="105"/>
    </location>
    <ligand>
        <name>ATP</name>
        <dbReference type="ChEBI" id="CHEBI:30616"/>
    </ligand>
</feature>
<feature type="binding site" evidence="1">
    <location>
        <position position="107"/>
    </location>
    <ligand>
        <name>Mg(2+)</name>
        <dbReference type="ChEBI" id="CHEBI:18420"/>
        <label>1</label>
    </ligand>
</feature>
<feature type="binding site" evidence="1">
    <location>
        <begin position="108"/>
        <end position="111"/>
    </location>
    <ligand>
        <name>substrate</name>
    </ligand>
</feature>
<feature type="binding site" evidence="1">
    <location>
        <position position="130"/>
    </location>
    <ligand>
        <name>substrate</name>
    </ligand>
</feature>
<feature type="binding site" evidence="1">
    <location>
        <position position="131"/>
    </location>
    <ligand>
        <name>Mg(2+)</name>
        <dbReference type="ChEBI" id="CHEBI:18420"/>
        <label>2</label>
    </ligand>
</feature>
<feature type="binding site" evidence="1">
    <location>
        <position position="260"/>
    </location>
    <ligand>
        <name>substrate</name>
    </ligand>
</feature>
<feature type="binding site" evidence="1">
    <location>
        <position position="288"/>
    </location>
    <ligand>
        <name>Mg(2+)</name>
        <dbReference type="ChEBI" id="CHEBI:18420"/>
        <label>2</label>
    </ligand>
</feature>
<feature type="binding site" evidence="1">
    <location>
        <begin position="332"/>
        <end position="334"/>
    </location>
    <ligand>
        <name>substrate</name>
    </ligand>
</feature>
<feature type="binding site" evidence="1">
    <location>
        <position position="520"/>
    </location>
    <ligand>
        <name>ATP</name>
        <dbReference type="ChEBI" id="CHEBI:30616"/>
    </ligand>
</feature>
<feature type="binding site" evidence="1">
    <location>
        <position position="557"/>
    </location>
    <ligand>
        <name>ATP</name>
        <dbReference type="ChEBI" id="CHEBI:30616"/>
    </ligand>
</feature>
<feature type="binding site" evidence="1">
    <location>
        <position position="558"/>
    </location>
    <ligand>
        <name>Mg(2+)</name>
        <dbReference type="ChEBI" id="CHEBI:18420"/>
        <label>1</label>
    </ligand>
</feature>
<feature type="binding site" evidence="1">
    <location>
        <position position="560"/>
    </location>
    <ligand>
        <name>substrate</name>
    </ligand>
</feature>
<comment type="function">
    <text evidence="1">Part of the phosphoribosylformylglycinamidine synthase complex involved in the purines biosynthetic pathway. Catalyzes the ATP-dependent conversion of formylglycinamide ribonucleotide (FGAR) and glutamine to yield formylglycinamidine ribonucleotide (FGAM) and glutamate. The FGAM synthase complex is composed of three subunits. PurQ produces an ammonia molecule by converting glutamine to glutamate. PurL transfers the ammonia molecule to FGAR to form FGAM in an ATP-dependent manner. PurS interacts with PurQ and PurL and is thought to assist in the transfer of the ammonia molecule from PurQ to PurL.</text>
</comment>
<comment type="catalytic activity">
    <reaction evidence="1">
        <text>N(2)-formyl-N(1)-(5-phospho-beta-D-ribosyl)glycinamide + L-glutamine + ATP + H2O = 2-formamido-N(1)-(5-O-phospho-beta-D-ribosyl)acetamidine + L-glutamate + ADP + phosphate + H(+)</text>
        <dbReference type="Rhea" id="RHEA:17129"/>
        <dbReference type="ChEBI" id="CHEBI:15377"/>
        <dbReference type="ChEBI" id="CHEBI:15378"/>
        <dbReference type="ChEBI" id="CHEBI:29985"/>
        <dbReference type="ChEBI" id="CHEBI:30616"/>
        <dbReference type="ChEBI" id="CHEBI:43474"/>
        <dbReference type="ChEBI" id="CHEBI:58359"/>
        <dbReference type="ChEBI" id="CHEBI:147286"/>
        <dbReference type="ChEBI" id="CHEBI:147287"/>
        <dbReference type="ChEBI" id="CHEBI:456216"/>
        <dbReference type="EC" id="6.3.5.3"/>
    </reaction>
</comment>
<comment type="pathway">
    <text evidence="1">Purine metabolism; IMP biosynthesis via de novo pathway; 5-amino-1-(5-phospho-D-ribosyl)imidazole from N(2)-formyl-N(1)-(5-phospho-D-ribosyl)glycinamide: step 1/2.</text>
</comment>
<comment type="subunit">
    <text evidence="1">Monomer. Part of the FGAM synthase complex composed of 1 PurL, 1 PurQ and 2 PurS subunits.</text>
</comment>
<comment type="subcellular location">
    <subcellularLocation>
        <location evidence="1">Cytoplasm</location>
    </subcellularLocation>
</comment>
<comment type="similarity">
    <text evidence="1">Belongs to the FGAMS family.</text>
</comment>
<proteinExistence type="inferred from homology"/>
<keyword id="KW-0067">ATP-binding</keyword>
<keyword id="KW-0963">Cytoplasm</keyword>
<keyword id="KW-0436">Ligase</keyword>
<keyword id="KW-0460">Magnesium</keyword>
<keyword id="KW-0479">Metal-binding</keyword>
<keyword id="KW-0547">Nucleotide-binding</keyword>
<keyword id="KW-0658">Purine biosynthesis</keyword>
<keyword id="KW-1185">Reference proteome</keyword>
<evidence type="ECO:0000255" key="1">
    <source>
        <dbReference type="HAMAP-Rule" id="MF_00420"/>
    </source>
</evidence>
<organism>
    <name type="scientific">Thermoplasma acidophilum (strain ATCC 25905 / DSM 1728 / JCM 9062 / NBRC 15155 / AMRC-C165)</name>
    <dbReference type="NCBI Taxonomy" id="273075"/>
    <lineage>
        <taxon>Archaea</taxon>
        <taxon>Methanobacteriati</taxon>
        <taxon>Thermoplasmatota</taxon>
        <taxon>Thermoplasmata</taxon>
        <taxon>Thermoplasmatales</taxon>
        <taxon>Thermoplasmataceae</taxon>
        <taxon>Thermoplasma</taxon>
    </lineage>
</organism>